<proteinExistence type="inferred from homology"/>
<accession>Q45968</accession>
<accession>B5QSB8</accession>
<accession>B5QSF5</accession>
<sequence length="364" mass="41052">MDPPLKDGVIMRQHRISIFKKRRRSMKDIKILGVDIAKDVFQLCGIDEWGKVIYTRRVKRAQYVSTVASLKVGCVVMEACGGANHWYRTFMGMGIPTQLISPQHVKPYVKSNKNDRNDAQAIAEAASRASMRFVQGKTVEQQDVQALLKIRDRLVKSRTALINEIRGLLQEYGLTMARGAKRFYEELPLILASEAVGLTPRMKRVLNCLYTELLNRDEAIGDYEEELKAVAKANEDCQRVQSIPGVGYLTALSVYASVGDIHQFHRSRQLSAFIGLVPRQHSSGNKEVLLGISKRGNVMLRTLLIHGARALLRHVKNKTDKKSLWLKALIERRGMNRACVALANKNAPIIWALLTRQETYRCGA</sequence>
<comment type="function">
    <text evidence="1">Required for the transposition of the insertion element.</text>
</comment>
<comment type="similarity">
    <text evidence="1">Belongs to the transposase IS1111A/IS1328/IS1533 family.</text>
</comment>
<comment type="sequence caution" evidence="1">
    <conflict type="erroneous initiation">
        <sequence resource="EMBL-CDS" id="AAA23313"/>
    </conflict>
</comment>
<comment type="sequence caution" evidence="1">
    <conflict type="erroneous initiation">
        <sequence resource="EMBL-CDS" id="ACI15319"/>
    </conflict>
</comment>
<organism>
    <name type="scientific">Coxiella burnetii (strain RSA 493 / Nine Mile phase I)</name>
    <dbReference type="NCBI Taxonomy" id="227377"/>
    <lineage>
        <taxon>Bacteria</taxon>
        <taxon>Pseudomonadati</taxon>
        <taxon>Pseudomonadota</taxon>
        <taxon>Gammaproteobacteria</taxon>
        <taxon>Legionellales</taxon>
        <taxon>Coxiellaceae</taxon>
        <taxon>Coxiella</taxon>
    </lineage>
</organism>
<feature type="chain" id="PRO_0000075452" description="Transposase for insertion sequence element IS1111A">
    <location>
        <begin position="1"/>
        <end position="364"/>
    </location>
</feature>
<evidence type="ECO:0000305" key="1"/>
<name>TRA1_COXBU</name>
<gene>
    <name type="ordered locus">CBU_0006</name>
</gene>
<gene>
    <name type="ordered locus">CBU_0040</name>
</gene>
<gene>
    <name type="ordered locus">CBU_0384</name>
</gene>
<gene>
    <name type="ordered locus">CBU_0523</name>
</gene>
<gene>
    <name type="ordered locus">CBU_0554</name>
</gene>
<gene>
    <name type="ordered locus">CBU_1090</name>
</gene>
<gene>
    <name type="ordered locus">CBU_1186</name>
</gene>
<gene>
    <name type="ordered locus">CBU_1217.1</name>
    <name type="ORF">CBU_1217a</name>
</gene>
<gene>
    <name type="ordered locus">CBU_1570.2</name>
    <name type="ORF">CBU_1570b</name>
</gene>
<gene>
    <name type="ordered locus">CBU_1590.2</name>
    <name type="ORF">CBU_1590b</name>
</gene>
<gene>
    <name type="ordered locus">CBU_1639.3</name>
    <name type="ORF">CBU_1639c</name>
</gene>
<gene>
    <name type="ordered locus">CBU_1699.1</name>
    <name type="ORF">CBU_1699a</name>
</gene>
<gene>
    <name type="ordered locus">CBU_1716.1</name>
    <name type="ORF">CBU_1716a</name>
</gene>
<gene>
    <name type="ordered locus">CBU_1758.1</name>
    <name type="ORF">CBU_1758a</name>
</gene>
<gene>
    <name type="ordered locus">CBU_1896.1</name>
    <name type="ORF">CBU_1896a</name>
</gene>
<gene>
    <name type="ordered locus">CBU_1959.2</name>
    <name type="ORF">CBU_1959b</name>
</gene>
<gene>
    <name type="ordered locus">CBU_1987.2</name>
    <name type="ORF">CBU_1987b</name>
</gene>
<protein>
    <recommendedName>
        <fullName>Transposase for insertion sequence element IS1111A</fullName>
    </recommendedName>
</protein>
<keyword id="KW-0233">DNA recombination</keyword>
<keyword id="KW-0238">DNA-binding</keyword>
<keyword id="KW-1185">Reference proteome</keyword>
<keyword id="KW-0814">Transposable element</keyword>
<keyword id="KW-0815">Transposition</keyword>
<reference key="1">
    <citation type="journal article" date="1992" name="J. Bacteriol.">
        <title>A Coxiella burnetti repeated DNA element resembling a bacterial insertion sequence.</title>
        <authorList>
            <person name="Hoover T.A."/>
            <person name="Vodkin M.H."/>
            <person name="Williams J.C."/>
        </authorList>
    </citation>
    <scope>NUCLEOTIDE SEQUENCE [GENOMIC DNA]</scope>
</reference>
<reference key="2">
    <citation type="journal article" date="2003" name="Proc. Natl. Acad. Sci. U.S.A.">
        <title>Complete genome sequence of the Q-fever pathogen, Coxiella burnetii.</title>
        <authorList>
            <person name="Seshadri R."/>
            <person name="Paulsen I.T."/>
            <person name="Eisen J.A."/>
            <person name="Read T.D."/>
            <person name="Nelson K.E."/>
            <person name="Nelson W.C."/>
            <person name="Ward N.L."/>
            <person name="Tettelin H."/>
            <person name="Davidsen T.M."/>
            <person name="Beanan M.J."/>
            <person name="DeBoy R.T."/>
            <person name="Daugherty S.C."/>
            <person name="Brinkac L.M."/>
            <person name="Madupu R."/>
            <person name="Dodson R.J."/>
            <person name="Khouri H.M."/>
            <person name="Lee K.H."/>
            <person name="Carty H.A."/>
            <person name="Scanlan D."/>
            <person name="Heinzen R.A."/>
            <person name="Thompson H.A."/>
            <person name="Samuel J.E."/>
            <person name="Fraser C.M."/>
            <person name="Heidelberg J.F."/>
        </authorList>
    </citation>
    <scope>NUCLEOTIDE SEQUENCE [LARGE SCALE GENOMIC DNA]</scope>
    <source>
        <strain>RSA 493 / Nine Mile phase I</strain>
    </source>
</reference>
<dbReference type="EMBL" id="M80806">
    <property type="protein sequence ID" value="AAA23313.1"/>
    <property type="status" value="ALT_INIT"/>
    <property type="molecule type" value="Genomic_DNA"/>
</dbReference>
<dbReference type="EMBL" id="AE016828">
    <property type="protein sequence ID" value="AAO89576.2"/>
    <property type="molecule type" value="Genomic_DNA"/>
</dbReference>
<dbReference type="EMBL" id="AE016828">
    <property type="protein sequence ID" value="AAO89609.2"/>
    <property type="molecule type" value="Genomic_DNA"/>
</dbReference>
<dbReference type="EMBL" id="AE016828">
    <property type="protein sequence ID" value="AAO89937.2"/>
    <property type="molecule type" value="Genomic_DNA"/>
</dbReference>
<dbReference type="EMBL" id="AE016828">
    <property type="protein sequence ID" value="AAO90069.2"/>
    <property type="molecule type" value="Genomic_DNA"/>
</dbReference>
<dbReference type="EMBL" id="AE016828">
    <property type="protein sequence ID" value="AAO90099.2"/>
    <property type="molecule type" value="Genomic_DNA"/>
</dbReference>
<dbReference type="EMBL" id="AE016828">
    <property type="protein sequence ID" value="AAO90603.2"/>
    <property type="molecule type" value="Genomic_DNA"/>
</dbReference>
<dbReference type="EMBL" id="AE016828">
    <property type="protein sequence ID" value="AAO90695.2"/>
    <property type="molecule type" value="Genomic_DNA"/>
</dbReference>
<dbReference type="EMBL" id="AE016828">
    <property type="protein sequence ID" value="ACI15282.1"/>
    <property type="molecule type" value="Genomic_DNA"/>
</dbReference>
<dbReference type="EMBL" id="AE016828">
    <property type="protein sequence ID" value="ACI15305.1"/>
    <property type="molecule type" value="Genomic_DNA"/>
</dbReference>
<dbReference type="EMBL" id="AE016828">
    <property type="protein sequence ID" value="ACI15307.1"/>
    <property type="molecule type" value="Genomic_DNA"/>
</dbReference>
<dbReference type="EMBL" id="AE016828">
    <property type="protein sequence ID" value="ACI15309.1"/>
    <property type="molecule type" value="Genomic_DNA"/>
</dbReference>
<dbReference type="EMBL" id="AE016828">
    <property type="protein sequence ID" value="ACI15313.1"/>
    <property type="molecule type" value="Genomic_DNA"/>
</dbReference>
<dbReference type="EMBL" id="AE016828">
    <property type="protein sequence ID" value="ACI15315.1"/>
    <property type="molecule type" value="Genomic_DNA"/>
</dbReference>
<dbReference type="EMBL" id="AE016828">
    <property type="protein sequence ID" value="ACI15319.1"/>
    <property type="status" value="ALT_INIT"/>
    <property type="molecule type" value="Genomic_DNA"/>
</dbReference>
<dbReference type="EMBL" id="AE016828">
    <property type="protein sequence ID" value="ACI15329.1"/>
    <property type="molecule type" value="Genomic_DNA"/>
</dbReference>
<dbReference type="EMBL" id="AE016828">
    <property type="protein sequence ID" value="ACI15335.1"/>
    <property type="molecule type" value="Genomic_DNA"/>
</dbReference>
<dbReference type="EMBL" id="AE016828">
    <property type="protein sequence ID" value="ACI15337.1"/>
    <property type="molecule type" value="Genomic_DNA"/>
</dbReference>
<dbReference type="RefSeq" id="NP_819062.2">
    <property type="nucleotide sequence ID" value="NC_002971.3"/>
</dbReference>
<dbReference type="RefSeq" id="NP_819095.2">
    <property type="nucleotide sequence ID" value="NC_002971.3"/>
</dbReference>
<dbReference type="RefSeq" id="NP_819423.2">
    <property type="nucleotide sequence ID" value="NC_002971.3"/>
</dbReference>
<dbReference type="RefSeq" id="NP_819555.2">
    <property type="nucleotide sequence ID" value="NC_002971.3"/>
</dbReference>
<dbReference type="RefSeq" id="NP_819585.2">
    <property type="nucleotide sequence ID" value="NC_002971.3"/>
</dbReference>
<dbReference type="RefSeq" id="NP_820089.2">
    <property type="nucleotide sequence ID" value="NC_002971.3"/>
</dbReference>
<dbReference type="RefSeq" id="NP_820181.2">
    <property type="nucleotide sequence ID" value="NC_002971.3"/>
</dbReference>
<dbReference type="RefSeq" id="WP_041952483.1">
    <property type="nucleotide sequence ID" value="NC_002971.4"/>
</dbReference>
<dbReference type="RefSeq" id="YP_002332991.1">
    <property type="nucleotide sequence ID" value="NC_002971.3"/>
</dbReference>
<dbReference type="RefSeq" id="YP_002333014.1">
    <property type="nucleotide sequence ID" value="NC_002971.3"/>
</dbReference>
<dbReference type="RefSeq" id="YP_002333016.1">
    <property type="nucleotide sequence ID" value="NC_002971.3"/>
</dbReference>
<dbReference type="RefSeq" id="YP_002333018.1">
    <property type="nucleotide sequence ID" value="NC_002971.3"/>
</dbReference>
<dbReference type="RefSeq" id="YP_002333022.1">
    <property type="nucleotide sequence ID" value="NC_002971.3"/>
</dbReference>
<dbReference type="RefSeq" id="YP_002333024.1">
    <property type="nucleotide sequence ID" value="NC_002971.3"/>
</dbReference>
<dbReference type="RefSeq" id="YP_002333028.1">
    <property type="nucleotide sequence ID" value="NC_002971.3"/>
</dbReference>
<dbReference type="RefSeq" id="YP_002333038.1">
    <property type="nucleotide sequence ID" value="NC_002971.3"/>
</dbReference>
<dbReference type="RefSeq" id="YP_002333044.1">
    <property type="nucleotide sequence ID" value="NC_002971.3"/>
</dbReference>
<dbReference type="RefSeq" id="YP_002333046.1">
    <property type="nucleotide sequence ID" value="NC_002971.3"/>
</dbReference>
<dbReference type="SMR" id="Q45968"/>
<dbReference type="STRING" id="227377.CBU_0006"/>
<dbReference type="EnsemblBacteria" id="AAO89576">
    <property type="protein sequence ID" value="AAO89576"/>
    <property type="gene ID" value="CBU_0006"/>
</dbReference>
<dbReference type="EnsemblBacteria" id="AAO89609">
    <property type="protein sequence ID" value="AAO89609"/>
    <property type="gene ID" value="CBU_0040"/>
</dbReference>
<dbReference type="EnsemblBacteria" id="AAO89937">
    <property type="protein sequence ID" value="AAO89937"/>
    <property type="gene ID" value="CBU_0384"/>
</dbReference>
<dbReference type="EnsemblBacteria" id="AAO90069">
    <property type="protein sequence ID" value="AAO90069"/>
    <property type="gene ID" value="CBU_0523"/>
</dbReference>
<dbReference type="EnsemblBacteria" id="AAO90099">
    <property type="protein sequence ID" value="AAO90099"/>
    <property type="gene ID" value="CBU_0554"/>
</dbReference>
<dbReference type="EnsemblBacteria" id="AAO90603">
    <property type="protein sequence ID" value="AAO90603"/>
    <property type="gene ID" value="CBU_1090"/>
</dbReference>
<dbReference type="EnsemblBacteria" id="AAO90695">
    <property type="protein sequence ID" value="AAO90695"/>
    <property type="gene ID" value="CBU_1186"/>
</dbReference>
<dbReference type="EnsemblBacteria" id="ACI15282">
    <property type="protein sequence ID" value="ACI15282"/>
    <property type="gene ID" value="CBU_1217a"/>
</dbReference>
<dbReference type="EnsemblBacteria" id="ACI15305">
    <property type="protein sequence ID" value="ACI15305"/>
    <property type="gene ID" value="CBU_1570b"/>
</dbReference>
<dbReference type="EnsemblBacteria" id="ACI15307">
    <property type="protein sequence ID" value="ACI15307"/>
    <property type="gene ID" value="CBU_1590b"/>
</dbReference>
<dbReference type="EnsemblBacteria" id="ACI15309">
    <property type="protein sequence ID" value="ACI15309"/>
    <property type="gene ID" value="CBU_1639c"/>
</dbReference>
<dbReference type="EnsemblBacteria" id="ACI15313">
    <property type="protein sequence ID" value="ACI15313"/>
    <property type="gene ID" value="CBU_1699a"/>
</dbReference>
<dbReference type="EnsemblBacteria" id="ACI15315">
    <property type="protein sequence ID" value="ACI15315"/>
    <property type="gene ID" value="CBU_1716a"/>
</dbReference>
<dbReference type="EnsemblBacteria" id="ACI15319">
    <property type="protein sequence ID" value="ACI15319"/>
    <property type="gene ID" value="CBU_1758a"/>
</dbReference>
<dbReference type="EnsemblBacteria" id="ACI15329">
    <property type="protein sequence ID" value="ACI15329"/>
    <property type="gene ID" value="CBU_1896a"/>
</dbReference>
<dbReference type="EnsemblBacteria" id="ACI15335">
    <property type="protein sequence ID" value="ACI15335"/>
    <property type="gene ID" value="CBU_1959b"/>
</dbReference>
<dbReference type="EnsemblBacteria" id="ACI15337">
    <property type="protein sequence ID" value="ACI15337"/>
    <property type="gene ID" value="CBU_1987b"/>
</dbReference>
<dbReference type="GeneID" id="1207902"/>
<dbReference type="GeneID" id="1207926"/>
<dbReference type="GeneID" id="1208267"/>
<dbReference type="GeneID" id="1208408"/>
<dbReference type="GeneID" id="1208439"/>
<dbReference type="GeneID" id="1208991"/>
<dbReference type="GeneID" id="1209090"/>
<dbReference type="GeneID" id="1209123"/>
<dbReference type="GeneID" id="1209481"/>
<dbReference type="GeneID" id="1209501"/>
<dbReference type="GeneID" id="1209551"/>
<dbReference type="GeneID" id="1209611"/>
<dbReference type="GeneID" id="1209628"/>
<dbReference type="GeneID" id="1209670"/>
<dbReference type="GeneID" id="1209811"/>
<dbReference type="GeneID" id="1209874"/>
<dbReference type="GeneID" id="1209903"/>
<dbReference type="KEGG" id="cbu:CBU_0006"/>
<dbReference type="KEGG" id="cbu:CBU_0040"/>
<dbReference type="KEGG" id="cbu:CBU_0384"/>
<dbReference type="KEGG" id="cbu:CBU_0523"/>
<dbReference type="KEGG" id="cbu:CBU_0554"/>
<dbReference type="KEGG" id="cbu:CBU_1090"/>
<dbReference type="KEGG" id="cbu:CBU_1186"/>
<dbReference type="KEGG" id="cbu:CBU_1217a"/>
<dbReference type="KEGG" id="cbu:CBU_1570b"/>
<dbReference type="KEGG" id="cbu:CBU_1590b"/>
<dbReference type="KEGG" id="cbu:CBU_1639c"/>
<dbReference type="KEGG" id="cbu:CBU_1699a"/>
<dbReference type="KEGG" id="cbu:CBU_1716a"/>
<dbReference type="KEGG" id="cbu:CBU_1758a"/>
<dbReference type="KEGG" id="cbu:CBU_1896a"/>
<dbReference type="KEGG" id="cbu:CBU_1959b"/>
<dbReference type="KEGG" id="cbu:CBU_1987b"/>
<dbReference type="PATRIC" id="fig|227377.7.peg.1083"/>
<dbReference type="eggNOG" id="COG3547">
    <property type="taxonomic scope" value="Bacteria"/>
</dbReference>
<dbReference type="HOGENOM" id="CLU_036902_3_1_6"/>
<dbReference type="OrthoDB" id="5289737at2"/>
<dbReference type="Proteomes" id="UP000002671">
    <property type="component" value="Chromosome"/>
</dbReference>
<dbReference type="GO" id="GO:0003677">
    <property type="term" value="F:DNA binding"/>
    <property type="evidence" value="ECO:0007669"/>
    <property type="project" value="UniProtKB-KW"/>
</dbReference>
<dbReference type="GO" id="GO:0004803">
    <property type="term" value="F:transposase activity"/>
    <property type="evidence" value="ECO:0007669"/>
    <property type="project" value="InterPro"/>
</dbReference>
<dbReference type="GO" id="GO:0006313">
    <property type="term" value="P:DNA transposition"/>
    <property type="evidence" value="ECO:0007669"/>
    <property type="project" value="InterPro"/>
</dbReference>
<dbReference type="InterPro" id="IPR002525">
    <property type="entry name" value="Transp_IS110-like_N"/>
</dbReference>
<dbReference type="InterPro" id="IPR047650">
    <property type="entry name" value="Transpos_IS110"/>
</dbReference>
<dbReference type="InterPro" id="IPR003346">
    <property type="entry name" value="Transposase_20"/>
</dbReference>
<dbReference type="NCBIfam" id="NF033542">
    <property type="entry name" value="transpos_IS110"/>
    <property type="match status" value="1"/>
</dbReference>
<dbReference type="PANTHER" id="PTHR33055:SF3">
    <property type="entry name" value="PUTATIVE TRANSPOSASE FOR IS117-RELATED"/>
    <property type="match status" value="1"/>
</dbReference>
<dbReference type="PANTHER" id="PTHR33055">
    <property type="entry name" value="TRANSPOSASE FOR INSERTION SEQUENCE ELEMENT IS1111A"/>
    <property type="match status" value="1"/>
</dbReference>
<dbReference type="Pfam" id="PF01548">
    <property type="entry name" value="DEDD_Tnp_IS110"/>
    <property type="match status" value="1"/>
</dbReference>
<dbReference type="Pfam" id="PF02371">
    <property type="entry name" value="Transposase_20"/>
    <property type="match status" value="1"/>
</dbReference>